<sequence length="138" mass="15883">MNTETKPLPAWLDKVRWDDNGLVPVIAQEASTNDVLMFAWMNREALAKTIETQRAVYYSRSRKRLWFKGEESGHVQHVHEVRLDCDEDVVLLKVEQVSGIACHTGRHSCFFQKFEGTVDAGDWVAVDPVLKDPEHIYK</sequence>
<protein>
    <recommendedName>
        <fullName evidence="1">Phosphoribosyl-AMP cyclohydrolase</fullName>
        <shortName evidence="1">PRA-CH</shortName>
        <ecNumber evidence="1">3.5.4.19</ecNumber>
    </recommendedName>
</protein>
<gene>
    <name evidence="1" type="primary">hisI</name>
    <name type="ordered locus">Bmul_0335</name>
    <name type="ordered locus">BMULJ_02919</name>
</gene>
<feature type="chain" id="PRO_0000136468" description="Phosphoribosyl-AMP cyclohydrolase">
    <location>
        <begin position="1"/>
        <end position="138"/>
    </location>
</feature>
<feature type="binding site" evidence="1">
    <location>
        <position position="84"/>
    </location>
    <ligand>
        <name>Mg(2+)</name>
        <dbReference type="ChEBI" id="CHEBI:18420"/>
    </ligand>
</feature>
<feature type="binding site" evidence="1">
    <location>
        <position position="85"/>
    </location>
    <ligand>
        <name>Zn(2+)</name>
        <dbReference type="ChEBI" id="CHEBI:29105"/>
        <note>ligand shared between dimeric partners</note>
    </ligand>
</feature>
<feature type="binding site" evidence="1">
    <location>
        <position position="86"/>
    </location>
    <ligand>
        <name>Mg(2+)</name>
        <dbReference type="ChEBI" id="CHEBI:18420"/>
    </ligand>
</feature>
<feature type="binding site" evidence="1">
    <location>
        <position position="88"/>
    </location>
    <ligand>
        <name>Mg(2+)</name>
        <dbReference type="ChEBI" id="CHEBI:18420"/>
    </ligand>
</feature>
<feature type="binding site" evidence="1">
    <location>
        <position position="102"/>
    </location>
    <ligand>
        <name>Zn(2+)</name>
        <dbReference type="ChEBI" id="CHEBI:29105"/>
        <note>ligand shared between dimeric partners</note>
    </ligand>
</feature>
<feature type="binding site" evidence="1">
    <location>
        <position position="109"/>
    </location>
    <ligand>
        <name>Zn(2+)</name>
        <dbReference type="ChEBI" id="CHEBI:29105"/>
        <note>ligand shared between dimeric partners</note>
    </ligand>
</feature>
<feature type="sequence conflict" description="In Ref. 1; BAC65277." evidence="2" ref="1">
    <original>E</original>
    <variation>D</variation>
    <location>
        <position position="51"/>
    </location>
</feature>
<reference key="1">
    <citation type="journal article" date="2003" name="J. Bacteriol.">
        <title>Distribution and organization of auxotrophic genes on the multichromosomal genome of Burkholderia multivorans ATCC 17616.</title>
        <authorList>
            <person name="Komatsu H."/>
            <person name="Imura Y."/>
            <person name="Ohori A."/>
            <person name="Nagata Y."/>
            <person name="Tsuda M."/>
        </authorList>
    </citation>
    <scope>NUCLEOTIDE SEQUENCE [GENOMIC DNA]</scope>
</reference>
<reference key="2">
    <citation type="submission" date="2007-10" db="EMBL/GenBank/DDBJ databases">
        <title>Complete sequence of chromosome 1 of Burkholderia multivorans ATCC 17616.</title>
        <authorList>
            <person name="Copeland A."/>
            <person name="Lucas S."/>
            <person name="Lapidus A."/>
            <person name="Barry K."/>
            <person name="Glavina del Rio T."/>
            <person name="Dalin E."/>
            <person name="Tice H."/>
            <person name="Pitluck S."/>
            <person name="Chain P."/>
            <person name="Malfatti S."/>
            <person name="Shin M."/>
            <person name="Vergez L."/>
            <person name="Schmutz J."/>
            <person name="Larimer F."/>
            <person name="Land M."/>
            <person name="Hauser L."/>
            <person name="Kyrpides N."/>
            <person name="Kim E."/>
            <person name="Tiedje J."/>
            <person name="Richardson P."/>
        </authorList>
    </citation>
    <scope>NUCLEOTIDE SEQUENCE [LARGE SCALE GENOMIC DNA]</scope>
    <source>
        <strain>ATCC 17616 / 249</strain>
    </source>
</reference>
<reference key="3">
    <citation type="submission" date="2007-04" db="EMBL/GenBank/DDBJ databases">
        <title>Complete genome sequence of Burkholderia multivorans ATCC 17616.</title>
        <authorList>
            <person name="Ohtsubo Y."/>
            <person name="Yamashita A."/>
            <person name="Kurokawa K."/>
            <person name="Takami H."/>
            <person name="Yuhara S."/>
            <person name="Nishiyama E."/>
            <person name="Endo R."/>
            <person name="Miyazaki R."/>
            <person name="Ono A."/>
            <person name="Yano K."/>
            <person name="Ito M."/>
            <person name="Sota M."/>
            <person name="Yuji N."/>
            <person name="Hattori M."/>
            <person name="Tsuda M."/>
        </authorList>
    </citation>
    <scope>NUCLEOTIDE SEQUENCE [LARGE SCALE GENOMIC DNA]</scope>
    <source>
        <strain>ATCC 17616 / 249</strain>
    </source>
</reference>
<proteinExistence type="inferred from homology"/>
<comment type="function">
    <text evidence="1">Catalyzes the hydrolysis of the adenine ring of phosphoribosyl-AMP.</text>
</comment>
<comment type="catalytic activity">
    <reaction evidence="1">
        <text>1-(5-phospho-beta-D-ribosyl)-5'-AMP + H2O = 1-(5-phospho-beta-D-ribosyl)-5-[(5-phospho-beta-D-ribosylamino)methylideneamino]imidazole-4-carboxamide</text>
        <dbReference type="Rhea" id="RHEA:20049"/>
        <dbReference type="ChEBI" id="CHEBI:15377"/>
        <dbReference type="ChEBI" id="CHEBI:58435"/>
        <dbReference type="ChEBI" id="CHEBI:59457"/>
        <dbReference type="EC" id="3.5.4.19"/>
    </reaction>
</comment>
<comment type="cofactor">
    <cofactor evidence="1">
        <name>Mg(2+)</name>
        <dbReference type="ChEBI" id="CHEBI:18420"/>
    </cofactor>
    <text evidence="1">Binds 1 Mg(2+) ion per subunit.</text>
</comment>
<comment type="cofactor">
    <cofactor evidence="1">
        <name>Zn(2+)</name>
        <dbReference type="ChEBI" id="CHEBI:29105"/>
    </cofactor>
    <text evidence="1">Binds 1 zinc ion per subunit.</text>
</comment>
<comment type="pathway">
    <text evidence="1">Amino-acid biosynthesis; L-histidine biosynthesis; L-histidine from 5-phospho-alpha-D-ribose 1-diphosphate: step 3/9.</text>
</comment>
<comment type="subunit">
    <text evidence="1">Homodimer.</text>
</comment>
<comment type="subcellular location">
    <subcellularLocation>
        <location evidence="1">Cytoplasm</location>
    </subcellularLocation>
</comment>
<comment type="similarity">
    <text evidence="1">Belongs to the PRA-CH family.</text>
</comment>
<evidence type="ECO:0000255" key="1">
    <source>
        <dbReference type="HAMAP-Rule" id="MF_01021"/>
    </source>
</evidence>
<evidence type="ECO:0000305" key="2"/>
<dbReference type="EC" id="3.5.4.19" evidence="1"/>
<dbReference type="EMBL" id="AB091436">
    <property type="protein sequence ID" value="BAC65277.1"/>
    <property type="molecule type" value="Genomic_DNA"/>
</dbReference>
<dbReference type="EMBL" id="CP000868">
    <property type="protein sequence ID" value="ABX14030.1"/>
    <property type="molecule type" value="Genomic_DNA"/>
</dbReference>
<dbReference type="EMBL" id="AP009385">
    <property type="protein sequence ID" value="BAG44804.1"/>
    <property type="molecule type" value="Genomic_DNA"/>
</dbReference>
<dbReference type="RefSeq" id="WP_012212591.1">
    <property type="nucleotide sequence ID" value="NC_010084.1"/>
</dbReference>
<dbReference type="SMR" id="Q845U6"/>
<dbReference type="STRING" id="395019.BMULJ_02919"/>
<dbReference type="KEGG" id="bmj:BMULJ_02919"/>
<dbReference type="KEGG" id="bmu:Bmul_0335"/>
<dbReference type="eggNOG" id="COG0139">
    <property type="taxonomic scope" value="Bacteria"/>
</dbReference>
<dbReference type="HOGENOM" id="CLU_048577_5_0_4"/>
<dbReference type="UniPathway" id="UPA00031">
    <property type="reaction ID" value="UER00008"/>
</dbReference>
<dbReference type="Proteomes" id="UP000008815">
    <property type="component" value="Chromosome 1"/>
</dbReference>
<dbReference type="GO" id="GO:0005737">
    <property type="term" value="C:cytoplasm"/>
    <property type="evidence" value="ECO:0007669"/>
    <property type="project" value="UniProtKB-SubCell"/>
</dbReference>
<dbReference type="GO" id="GO:0000287">
    <property type="term" value="F:magnesium ion binding"/>
    <property type="evidence" value="ECO:0007669"/>
    <property type="project" value="UniProtKB-UniRule"/>
</dbReference>
<dbReference type="GO" id="GO:0004635">
    <property type="term" value="F:phosphoribosyl-AMP cyclohydrolase activity"/>
    <property type="evidence" value="ECO:0007669"/>
    <property type="project" value="UniProtKB-UniRule"/>
</dbReference>
<dbReference type="GO" id="GO:0008270">
    <property type="term" value="F:zinc ion binding"/>
    <property type="evidence" value="ECO:0007669"/>
    <property type="project" value="UniProtKB-UniRule"/>
</dbReference>
<dbReference type="GO" id="GO:0000105">
    <property type="term" value="P:L-histidine biosynthetic process"/>
    <property type="evidence" value="ECO:0007669"/>
    <property type="project" value="UniProtKB-UniRule"/>
</dbReference>
<dbReference type="FunFam" id="3.10.20.810:FF:000001">
    <property type="entry name" value="Histidine biosynthesis bifunctional protein HisIE"/>
    <property type="match status" value="1"/>
</dbReference>
<dbReference type="Gene3D" id="3.10.20.810">
    <property type="entry name" value="Phosphoribosyl-AMP cyclohydrolase"/>
    <property type="match status" value="1"/>
</dbReference>
<dbReference type="HAMAP" id="MF_01021">
    <property type="entry name" value="HisI"/>
    <property type="match status" value="1"/>
</dbReference>
<dbReference type="InterPro" id="IPR026660">
    <property type="entry name" value="PRA-CH"/>
</dbReference>
<dbReference type="InterPro" id="IPR002496">
    <property type="entry name" value="PRib_AMP_CycHydrolase_dom"/>
</dbReference>
<dbReference type="InterPro" id="IPR038019">
    <property type="entry name" value="PRib_AMP_CycHydrolase_sf"/>
</dbReference>
<dbReference type="NCBIfam" id="NF000768">
    <property type="entry name" value="PRK00051.1"/>
    <property type="match status" value="1"/>
</dbReference>
<dbReference type="PANTHER" id="PTHR42945">
    <property type="entry name" value="HISTIDINE BIOSYNTHESIS BIFUNCTIONAL PROTEIN"/>
    <property type="match status" value="1"/>
</dbReference>
<dbReference type="PANTHER" id="PTHR42945:SF1">
    <property type="entry name" value="HISTIDINE BIOSYNTHESIS BIFUNCTIONAL PROTEIN HIS7"/>
    <property type="match status" value="1"/>
</dbReference>
<dbReference type="Pfam" id="PF01502">
    <property type="entry name" value="PRA-CH"/>
    <property type="match status" value="1"/>
</dbReference>
<dbReference type="SUPFAM" id="SSF141734">
    <property type="entry name" value="HisI-like"/>
    <property type="match status" value="1"/>
</dbReference>
<accession>Q845U6</accession>
<accession>A9AE08</accession>
<name>HIS3_BURM1</name>
<keyword id="KW-0028">Amino-acid biosynthesis</keyword>
<keyword id="KW-0963">Cytoplasm</keyword>
<keyword id="KW-0368">Histidine biosynthesis</keyword>
<keyword id="KW-0378">Hydrolase</keyword>
<keyword id="KW-0460">Magnesium</keyword>
<keyword id="KW-0479">Metal-binding</keyword>
<keyword id="KW-1185">Reference proteome</keyword>
<keyword id="KW-0862">Zinc</keyword>
<organism>
    <name type="scientific">Burkholderia multivorans (strain ATCC 17616 / 249)</name>
    <dbReference type="NCBI Taxonomy" id="395019"/>
    <lineage>
        <taxon>Bacteria</taxon>
        <taxon>Pseudomonadati</taxon>
        <taxon>Pseudomonadota</taxon>
        <taxon>Betaproteobacteria</taxon>
        <taxon>Burkholderiales</taxon>
        <taxon>Burkholderiaceae</taxon>
        <taxon>Burkholderia</taxon>
        <taxon>Burkholderia cepacia complex</taxon>
    </lineage>
</organism>